<comment type="function">
    <text evidence="1">One of several proteins that assist in the late maturation steps of the functional core of the 30S ribosomal subunit. Helps release RbfA from mature subunits. May play a role in the assembly of ribosomal proteins into the subunit. Circularly permuted GTPase that catalyzes slow GTP hydrolysis, GTPase activity is stimulated by the 30S ribosomal subunit.</text>
</comment>
<comment type="cofactor">
    <cofactor evidence="1">
        <name>Zn(2+)</name>
        <dbReference type="ChEBI" id="CHEBI:29105"/>
    </cofactor>
    <text evidence="1">Binds 1 zinc ion per subunit.</text>
</comment>
<comment type="subunit">
    <text evidence="1">Monomer. Associates with 30S ribosomal subunit, binds 16S rRNA.</text>
</comment>
<comment type="subcellular location">
    <subcellularLocation>
        <location evidence="1">Cytoplasm</location>
    </subcellularLocation>
</comment>
<comment type="similarity">
    <text evidence="1">Belongs to the TRAFAC class YlqF/YawG GTPase family. RsgA subfamily.</text>
</comment>
<protein>
    <recommendedName>
        <fullName evidence="1">Small ribosomal subunit biogenesis GTPase RsgA</fullName>
        <ecNumber evidence="1">3.6.1.-</ecNumber>
    </recommendedName>
</protein>
<sequence>MAEGKIIKALSGFYYVLSEGKVFQCRGRGVFRKQKITPLVGDHVEFQATSETEGYIMNIRERKNWLVRPPIANVEQAILVFSAVEPDFSTRLLDRFLVLVESKHIRPIIVVNKMDLVDDQTKPTMEQYIRDYRQIGYDVIETSTITKLGVEQLLSYLEGHISVFAGQSGVGKSSLLNALRPDLQLKTNDISTHLGRGKHTTRHVELLEIGGGLVADTPGFSALELDDIELEELPLYFPEFCERSEECKFRGCLHIAEPKCAVREAVESGKIPSYRYENYISFVEEIKERKPRY</sequence>
<gene>
    <name evidence="1" type="primary">rsgA</name>
    <name type="ordered locus">GWCH70_1068</name>
</gene>
<proteinExistence type="inferred from homology"/>
<reference key="1">
    <citation type="submission" date="2009-06" db="EMBL/GenBank/DDBJ databases">
        <title>Complete sequence of chromosome of Geopacillus sp. WCH70.</title>
        <authorList>
            <consortium name="US DOE Joint Genome Institute"/>
            <person name="Lucas S."/>
            <person name="Copeland A."/>
            <person name="Lapidus A."/>
            <person name="Glavina del Rio T."/>
            <person name="Dalin E."/>
            <person name="Tice H."/>
            <person name="Bruce D."/>
            <person name="Goodwin L."/>
            <person name="Pitluck S."/>
            <person name="Chertkov O."/>
            <person name="Brettin T."/>
            <person name="Detter J.C."/>
            <person name="Han C."/>
            <person name="Larimer F."/>
            <person name="Land M."/>
            <person name="Hauser L."/>
            <person name="Kyrpides N."/>
            <person name="Mikhailova N."/>
            <person name="Brumm P."/>
            <person name="Mead D.A."/>
            <person name="Richardson P."/>
        </authorList>
    </citation>
    <scope>NUCLEOTIDE SEQUENCE [LARGE SCALE GENOMIC DNA]</scope>
    <source>
        <strain>WCH70</strain>
    </source>
</reference>
<organism>
    <name type="scientific">Geobacillus sp. (strain WCH70)</name>
    <dbReference type="NCBI Taxonomy" id="471223"/>
    <lineage>
        <taxon>Bacteria</taxon>
        <taxon>Bacillati</taxon>
        <taxon>Bacillota</taxon>
        <taxon>Bacilli</taxon>
        <taxon>Bacillales</taxon>
        <taxon>Anoxybacillaceae</taxon>
        <taxon>Geobacillus</taxon>
    </lineage>
</organism>
<evidence type="ECO:0000255" key="1">
    <source>
        <dbReference type="HAMAP-Rule" id="MF_01820"/>
    </source>
</evidence>
<evidence type="ECO:0000255" key="2">
    <source>
        <dbReference type="PROSITE-ProRule" id="PRU01058"/>
    </source>
</evidence>
<name>RSGA_GEOSW</name>
<keyword id="KW-0963">Cytoplasm</keyword>
<keyword id="KW-0342">GTP-binding</keyword>
<keyword id="KW-0378">Hydrolase</keyword>
<keyword id="KW-0479">Metal-binding</keyword>
<keyword id="KW-0547">Nucleotide-binding</keyword>
<keyword id="KW-0690">Ribosome biogenesis</keyword>
<keyword id="KW-0694">RNA-binding</keyword>
<keyword id="KW-0699">rRNA-binding</keyword>
<keyword id="KW-0862">Zinc</keyword>
<accession>C5D8S1</accession>
<dbReference type="EC" id="3.6.1.-" evidence="1"/>
<dbReference type="EMBL" id="CP001638">
    <property type="protein sequence ID" value="ACS23928.1"/>
    <property type="molecule type" value="Genomic_DNA"/>
</dbReference>
<dbReference type="SMR" id="C5D8S1"/>
<dbReference type="STRING" id="471223.GWCH70_1068"/>
<dbReference type="KEGG" id="gwc:GWCH70_1068"/>
<dbReference type="eggNOG" id="COG1162">
    <property type="taxonomic scope" value="Bacteria"/>
</dbReference>
<dbReference type="HOGENOM" id="CLU_033617_2_1_9"/>
<dbReference type="OrthoDB" id="9809485at2"/>
<dbReference type="GO" id="GO:0005737">
    <property type="term" value="C:cytoplasm"/>
    <property type="evidence" value="ECO:0007669"/>
    <property type="project" value="UniProtKB-SubCell"/>
</dbReference>
<dbReference type="GO" id="GO:0005525">
    <property type="term" value="F:GTP binding"/>
    <property type="evidence" value="ECO:0007669"/>
    <property type="project" value="UniProtKB-UniRule"/>
</dbReference>
<dbReference type="GO" id="GO:0003924">
    <property type="term" value="F:GTPase activity"/>
    <property type="evidence" value="ECO:0007669"/>
    <property type="project" value="UniProtKB-UniRule"/>
</dbReference>
<dbReference type="GO" id="GO:0046872">
    <property type="term" value="F:metal ion binding"/>
    <property type="evidence" value="ECO:0007669"/>
    <property type="project" value="UniProtKB-KW"/>
</dbReference>
<dbReference type="GO" id="GO:0019843">
    <property type="term" value="F:rRNA binding"/>
    <property type="evidence" value="ECO:0007669"/>
    <property type="project" value="UniProtKB-KW"/>
</dbReference>
<dbReference type="GO" id="GO:0042274">
    <property type="term" value="P:ribosomal small subunit biogenesis"/>
    <property type="evidence" value="ECO:0007669"/>
    <property type="project" value="UniProtKB-UniRule"/>
</dbReference>
<dbReference type="CDD" id="cd04466">
    <property type="entry name" value="S1_YloQ_GTPase"/>
    <property type="match status" value="1"/>
</dbReference>
<dbReference type="CDD" id="cd01854">
    <property type="entry name" value="YjeQ_EngC"/>
    <property type="match status" value="1"/>
</dbReference>
<dbReference type="Gene3D" id="2.40.50.140">
    <property type="entry name" value="Nucleic acid-binding proteins"/>
    <property type="match status" value="1"/>
</dbReference>
<dbReference type="Gene3D" id="3.40.50.300">
    <property type="entry name" value="P-loop containing nucleotide triphosphate hydrolases"/>
    <property type="match status" value="1"/>
</dbReference>
<dbReference type="Gene3D" id="1.10.40.50">
    <property type="entry name" value="Probable gtpase engc, domain 3"/>
    <property type="match status" value="1"/>
</dbReference>
<dbReference type="HAMAP" id="MF_01820">
    <property type="entry name" value="GTPase_RsgA"/>
    <property type="match status" value="1"/>
</dbReference>
<dbReference type="InterPro" id="IPR030378">
    <property type="entry name" value="G_CP_dom"/>
</dbReference>
<dbReference type="InterPro" id="IPR012340">
    <property type="entry name" value="NA-bd_OB-fold"/>
</dbReference>
<dbReference type="InterPro" id="IPR027417">
    <property type="entry name" value="P-loop_NTPase"/>
</dbReference>
<dbReference type="InterPro" id="IPR004881">
    <property type="entry name" value="Ribosome_biogen_GTPase_RsgA"/>
</dbReference>
<dbReference type="InterPro" id="IPR010914">
    <property type="entry name" value="RsgA_GTPase_dom"/>
</dbReference>
<dbReference type="InterPro" id="IPR031944">
    <property type="entry name" value="RsgA_N"/>
</dbReference>
<dbReference type="NCBIfam" id="TIGR00157">
    <property type="entry name" value="ribosome small subunit-dependent GTPase A"/>
    <property type="match status" value="1"/>
</dbReference>
<dbReference type="PANTHER" id="PTHR32120">
    <property type="entry name" value="SMALL RIBOSOMAL SUBUNIT BIOGENESIS GTPASE RSGA"/>
    <property type="match status" value="1"/>
</dbReference>
<dbReference type="PANTHER" id="PTHR32120:SF11">
    <property type="entry name" value="SMALL RIBOSOMAL SUBUNIT BIOGENESIS GTPASE RSGA 1, MITOCHONDRIAL-RELATED"/>
    <property type="match status" value="1"/>
</dbReference>
<dbReference type="Pfam" id="PF03193">
    <property type="entry name" value="RsgA_GTPase"/>
    <property type="match status" value="1"/>
</dbReference>
<dbReference type="Pfam" id="PF16745">
    <property type="entry name" value="RsgA_N"/>
    <property type="match status" value="1"/>
</dbReference>
<dbReference type="SUPFAM" id="SSF50249">
    <property type="entry name" value="Nucleic acid-binding proteins"/>
    <property type="match status" value="1"/>
</dbReference>
<dbReference type="SUPFAM" id="SSF52540">
    <property type="entry name" value="P-loop containing nucleoside triphosphate hydrolases"/>
    <property type="match status" value="1"/>
</dbReference>
<dbReference type="PROSITE" id="PS50936">
    <property type="entry name" value="ENGC_GTPASE"/>
    <property type="match status" value="1"/>
</dbReference>
<dbReference type="PROSITE" id="PS51721">
    <property type="entry name" value="G_CP"/>
    <property type="match status" value="1"/>
</dbReference>
<feature type="chain" id="PRO_1000216042" description="Small ribosomal subunit biogenesis GTPase RsgA">
    <location>
        <begin position="1"/>
        <end position="293"/>
    </location>
</feature>
<feature type="domain" description="CP-type G" evidence="2">
    <location>
        <begin position="63"/>
        <end position="223"/>
    </location>
</feature>
<feature type="binding site" evidence="1">
    <location>
        <begin position="112"/>
        <end position="115"/>
    </location>
    <ligand>
        <name>GTP</name>
        <dbReference type="ChEBI" id="CHEBI:37565"/>
    </ligand>
</feature>
<feature type="binding site" evidence="1">
    <location>
        <begin position="166"/>
        <end position="174"/>
    </location>
    <ligand>
        <name>GTP</name>
        <dbReference type="ChEBI" id="CHEBI:37565"/>
    </ligand>
</feature>
<feature type="binding site" evidence="1">
    <location>
        <position position="247"/>
    </location>
    <ligand>
        <name>Zn(2+)</name>
        <dbReference type="ChEBI" id="CHEBI:29105"/>
    </ligand>
</feature>
<feature type="binding site" evidence="1">
    <location>
        <position position="252"/>
    </location>
    <ligand>
        <name>Zn(2+)</name>
        <dbReference type="ChEBI" id="CHEBI:29105"/>
    </ligand>
</feature>
<feature type="binding site" evidence="1">
    <location>
        <position position="254"/>
    </location>
    <ligand>
        <name>Zn(2+)</name>
        <dbReference type="ChEBI" id="CHEBI:29105"/>
    </ligand>
</feature>
<feature type="binding site" evidence="1">
    <location>
        <position position="260"/>
    </location>
    <ligand>
        <name>Zn(2+)</name>
        <dbReference type="ChEBI" id="CHEBI:29105"/>
    </ligand>
</feature>